<organism>
    <name type="scientific">Mus musculus</name>
    <name type="common">Mouse</name>
    <dbReference type="NCBI Taxonomy" id="10090"/>
    <lineage>
        <taxon>Eukaryota</taxon>
        <taxon>Metazoa</taxon>
        <taxon>Chordata</taxon>
        <taxon>Craniata</taxon>
        <taxon>Vertebrata</taxon>
        <taxon>Euteleostomi</taxon>
        <taxon>Mammalia</taxon>
        <taxon>Eutheria</taxon>
        <taxon>Euarchontoglires</taxon>
        <taxon>Glires</taxon>
        <taxon>Rodentia</taxon>
        <taxon>Myomorpha</taxon>
        <taxon>Muroidea</taxon>
        <taxon>Muridae</taxon>
        <taxon>Murinae</taxon>
        <taxon>Mus</taxon>
        <taxon>Mus</taxon>
    </lineage>
</organism>
<keyword id="KW-0106">Calcium</keyword>
<keyword id="KW-0143">Chaperone</keyword>
<keyword id="KW-0256">Endoplasmic reticulum</keyword>
<keyword id="KW-0325">Glycoprotein</keyword>
<keyword id="KW-0479">Metal-binding</keyword>
<keyword id="KW-1185">Reference proteome</keyword>
<keyword id="KW-0677">Repeat</keyword>
<keyword id="KW-0732">Signal</keyword>
<proteinExistence type="evidence at protein level"/>
<evidence type="ECO:0000250" key="1">
    <source>
        <dbReference type="UniProtKB" id="I6L9G5"/>
    </source>
</evidence>
<evidence type="ECO:0000250" key="2">
    <source>
        <dbReference type="UniProtKB" id="Q96D15"/>
    </source>
</evidence>
<evidence type="ECO:0000255" key="3"/>
<evidence type="ECO:0000255" key="4">
    <source>
        <dbReference type="PROSITE-ProRule" id="PRU00448"/>
    </source>
</evidence>
<evidence type="ECO:0000255" key="5">
    <source>
        <dbReference type="PROSITE-ProRule" id="PRU10138"/>
    </source>
</evidence>
<evidence type="ECO:0000256" key="6">
    <source>
        <dbReference type="SAM" id="MobiDB-lite"/>
    </source>
</evidence>
<evidence type="ECO:0000269" key="7">
    <source>
    </source>
</evidence>
<evidence type="ECO:0000305" key="8"/>
<evidence type="ECO:0000312" key="9">
    <source>
        <dbReference type="MGI" id="MGI:1277122"/>
    </source>
</evidence>
<gene>
    <name evidence="9" type="primary">Rcn3</name>
    <name type="synonym">D7Ertd671e</name>
</gene>
<reference key="1">
    <citation type="journal article" date="2005" name="Science">
        <title>The transcriptional landscape of the mammalian genome.</title>
        <authorList>
            <person name="Carninci P."/>
            <person name="Kasukawa T."/>
            <person name="Katayama S."/>
            <person name="Gough J."/>
            <person name="Frith M.C."/>
            <person name="Maeda N."/>
            <person name="Oyama R."/>
            <person name="Ravasi T."/>
            <person name="Lenhard B."/>
            <person name="Wells C."/>
            <person name="Kodzius R."/>
            <person name="Shimokawa K."/>
            <person name="Bajic V.B."/>
            <person name="Brenner S.E."/>
            <person name="Batalov S."/>
            <person name="Forrest A.R."/>
            <person name="Zavolan M."/>
            <person name="Davis M.J."/>
            <person name="Wilming L.G."/>
            <person name="Aidinis V."/>
            <person name="Allen J.E."/>
            <person name="Ambesi-Impiombato A."/>
            <person name="Apweiler R."/>
            <person name="Aturaliya R.N."/>
            <person name="Bailey T.L."/>
            <person name="Bansal M."/>
            <person name="Baxter L."/>
            <person name="Beisel K.W."/>
            <person name="Bersano T."/>
            <person name="Bono H."/>
            <person name="Chalk A.M."/>
            <person name="Chiu K.P."/>
            <person name="Choudhary V."/>
            <person name="Christoffels A."/>
            <person name="Clutterbuck D.R."/>
            <person name="Crowe M.L."/>
            <person name="Dalla E."/>
            <person name="Dalrymple B.P."/>
            <person name="de Bono B."/>
            <person name="Della Gatta G."/>
            <person name="di Bernardo D."/>
            <person name="Down T."/>
            <person name="Engstrom P."/>
            <person name="Fagiolini M."/>
            <person name="Faulkner G."/>
            <person name="Fletcher C.F."/>
            <person name="Fukushima T."/>
            <person name="Furuno M."/>
            <person name="Futaki S."/>
            <person name="Gariboldi M."/>
            <person name="Georgii-Hemming P."/>
            <person name="Gingeras T.R."/>
            <person name="Gojobori T."/>
            <person name="Green R.E."/>
            <person name="Gustincich S."/>
            <person name="Harbers M."/>
            <person name="Hayashi Y."/>
            <person name="Hensch T.K."/>
            <person name="Hirokawa N."/>
            <person name="Hill D."/>
            <person name="Huminiecki L."/>
            <person name="Iacono M."/>
            <person name="Ikeo K."/>
            <person name="Iwama A."/>
            <person name="Ishikawa T."/>
            <person name="Jakt M."/>
            <person name="Kanapin A."/>
            <person name="Katoh M."/>
            <person name="Kawasawa Y."/>
            <person name="Kelso J."/>
            <person name="Kitamura H."/>
            <person name="Kitano H."/>
            <person name="Kollias G."/>
            <person name="Krishnan S.P."/>
            <person name="Kruger A."/>
            <person name="Kummerfeld S.K."/>
            <person name="Kurochkin I.V."/>
            <person name="Lareau L.F."/>
            <person name="Lazarevic D."/>
            <person name="Lipovich L."/>
            <person name="Liu J."/>
            <person name="Liuni S."/>
            <person name="McWilliam S."/>
            <person name="Madan Babu M."/>
            <person name="Madera M."/>
            <person name="Marchionni L."/>
            <person name="Matsuda H."/>
            <person name="Matsuzawa S."/>
            <person name="Miki H."/>
            <person name="Mignone F."/>
            <person name="Miyake S."/>
            <person name="Morris K."/>
            <person name="Mottagui-Tabar S."/>
            <person name="Mulder N."/>
            <person name="Nakano N."/>
            <person name="Nakauchi H."/>
            <person name="Ng P."/>
            <person name="Nilsson R."/>
            <person name="Nishiguchi S."/>
            <person name="Nishikawa S."/>
            <person name="Nori F."/>
            <person name="Ohara O."/>
            <person name="Okazaki Y."/>
            <person name="Orlando V."/>
            <person name="Pang K.C."/>
            <person name="Pavan W.J."/>
            <person name="Pavesi G."/>
            <person name="Pesole G."/>
            <person name="Petrovsky N."/>
            <person name="Piazza S."/>
            <person name="Reed J."/>
            <person name="Reid J.F."/>
            <person name="Ring B.Z."/>
            <person name="Ringwald M."/>
            <person name="Rost B."/>
            <person name="Ruan Y."/>
            <person name="Salzberg S.L."/>
            <person name="Sandelin A."/>
            <person name="Schneider C."/>
            <person name="Schoenbach C."/>
            <person name="Sekiguchi K."/>
            <person name="Semple C.A."/>
            <person name="Seno S."/>
            <person name="Sessa L."/>
            <person name="Sheng Y."/>
            <person name="Shibata Y."/>
            <person name="Shimada H."/>
            <person name="Shimada K."/>
            <person name="Silva D."/>
            <person name="Sinclair B."/>
            <person name="Sperling S."/>
            <person name="Stupka E."/>
            <person name="Sugiura K."/>
            <person name="Sultana R."/>
            <person name="Takenaka Y."/>
            <person name="Taki K."/>
            <person name="Tammoja K."/>
            <person name="Tan S.L."/>
            <person name="Tang S."/>
            <person name="Taylor M.S."/>
            <person name="Tegner J."/>
            <person name="Teichmann S.A."/>
            <person name="Ueda H.R."/>
            <person name="van Nimwegen E."/>
            <person name="Verardo R."/>
            <person name="Wei C.L."/>
            <person name="Yagi K."/>
            <person name="Yamanishi H."/>
            <person name="Zabarovsky E."/>
            <person name="Zhu S."/>
            <person name="Zimmer A."/>
            <person name="Hide W."/>
            <person name="Bult C."/>
            <person name="Grimmond S.M."/>
            <person name="Teasdale R.D."/>
            <person name="Liu E.T."/>
            <person name="Brusic V."/>
            <person name="Quackenbush J."/>
            <person name="Wahlestedt C."/>
            <person name="Mattick J.S."/>
            <person name="Hume D.A."/>
            <person name="Kai C."/>
            <person name="Sasaki D."/>
            <person name="Tomaru Y."/>
            <person name="Fukuda S."/>
            <person name="Kanamori-Katayama M."/>
            <person name="Suzuki M."/>
            <person name="Aoki J."/>
            <person name="Arakawa T."/>
            <person name="Iida J."/>
            <person name="Imamura K."/>
            <person name="Itoh M."/>
            <person name="Kato T."/>
            <person name="Kawaji H."/>
            <person name="Kawagashira N."/>
            <person name="Kawashima T."/>
            <person name="Kojima M."/>
            <person name="Kondo S."/>
            <person name="Konno H."/>
            <person name="Nakano K."/>
            <person name="Ninomiya N."/>
            <person name="Nishio T."/>
            <person name="Okada M."/>
            <person name="Plessy C."/>
            <person name="Shibata K."/>
            <person name="Shiraki T."/>
            <person name="Suzuki S."/>
            <person name="Tagami M."/>
            <person name="Waki K."/>
            <person name="Watahiki A."/>
            <person name="Okamura-Oho Y."/>
            <person name="Suzuki H."/>
            <person name="Kawai J."/>
            <person name="Hayashizaki Y."/>
        </authorList>
    </citation>
    <scope>NUCLEOTIDE SEQUENCE [LARGE SCALE MRNA]</scope>
    <source>
        <strain>C57BL/6J</strain>
        <tissue>Embryo</tissue>
        <tissue>Testis</tissue>
    </source>
</reference>
<reference key="2">
    <citation type="journal article" date="2004" name="Genome Res.">
        <title>The status, quality, and expansion of the NIH full-length cDNA project: the Mammalian Gene Collection (MGC).</title>
        <authorList>
            <consortium name="The MGC Project Team"/>
        </authorList>
    </citation>
    <scope>NUCLEOTIDE SEQUENCE [LARGE SCALE MRNA]</scope>
    <source>
        <strain>C57BL/6J</strain>
        <strain>Czech II</strain>
        <strain>FVB/N</strain>
        <tissue>Colon</tissue>
        <tissue>Mammary gland</tissue>
    </source>
</reference>
<reference key="3">
    <citation type="journal article" date="2010" name="Cell">
        <title>A tissue-specific atlas of mouse protein phosphorylation and expression.</title>
        <authorList>
            <person name="Huttlin E.L."/>
            <person name="Jedrychowski M.P."/>
            <person name="Elias J.E."/>
            <person name="Goswami T."/>
            <person name="Rad R."/>
            <person name="Beausoleil S.A."/>
            <person name="Villen J."/>
            <person name="Haas W."/>
            <person name="Sowa M.E."/>
            <person name="Gygi S.P."/>
        </authorList>
    </citation>
    <scope>IDENTIFICATION BY MASS SPECTROMETRY [LARGE SCALE ANALYSIS]</scope>
    <source>
        <tissue>Brown adipose tissue</tissue>
        <tissue>Heart</tissue>
        <tissue>Liver</tissue>
        <tissue>Lung</tissue>
        <tissue>Pancreas</tissue>
        <tissue>Spleen</tissue>
        <tissue>Testis</tissue>
    </source>
</reference>
<reference key="4">
    <citation type="journal article" date="2016" name="Am. J. Respir. Cell Mol. Biol.">
        <title>Neonatal Respiratory Failure with Retarded Perinatal Lung Maturation in Mice Caused by Reticulocalbin 3 Disruption.</title>
        <authorList>
            <person name="Jin J."/>
            <person name="Li Y."/>
            <person name="Ren J."/>
            <person name="Man Lam S."/>
            <person name="Zhang Y."/>
            <person name="Hou Y."/>
            <person name="Zhang X."/>
            <person name="Xu R."/>
            <person name="Shui G."/>
            <person name="Ma R.Z."/>
        </authorList>
    </citation>
    <scope>FUNCTION</scope>
    <scope>SUBCELLULAR LOCATION</scope>
    <scope>TISSUE SPECIFICITY</scope>
    <scope>DEVELOPMENTAL STAGE</scope>
    <scope>DISRUPTION PHENOTYPE</scope>
</reference>
<name>RCN3_MOUSE</name>
<sequence>MMWRWSFLLLLLLLRHWALGKPSPDAGPHGQDRVHHGTPLSEAPHDDAHGNFQYDHEAFLGRDVAKEFDKLSPEESQARLGRIVDRMDLAGDSDGWVSLAELRAWIAHTQQRHIRDSVSAAWHTYDTDRDGRVGWEELRNATYGHYEPGEEFHDVEDAETYKKMLARDERRFRVADQDGDSMATREELTAFLHPEEFPHMRDIVVAETLEDLDKNKDGYVQVEEYIADLYSEEPGEEEPAWVQTERQQFREFRDLNKDGRLDGSEVGYWVLPPSQDQPLVEANHLLHESDTDKDGRLSKAEILSNWNMFVGSQATNYGEDLTRHHDEL</sequence>
<accession>Q8BH97</accession>
<accession>Q58E50</accession>
<accession>Q8R137</accession>
<accession>Q99K35</accession>
<accession>Q9CTD4</accession>
<feature type="signal peptide" evidence="3">
    <location>
        <begin position="1"/>
        <end position="20"/>
    </location>
</feature>
<feature type="chain" id="PRO_0000004152" description="Reticulocalbin-3">
    <location>
        <begin position="21"/>
        <end position="328"/>
    </location>
</feature>
<feature type="domain" description="EF-hand 1" evidence="4">
    <location>
        <begin position="77"/>
        <end position="112"/>
    </location>
</feature>
<feature type="domain" description="EF-hand 2" evidence="4">
    <location>
        <begin position="113"/>
        <end position="148"/>
    </location>
</feature>
<feature type="domain" description="EF-hand 3" evidence="4">
    <location>
        <begin position="163"/>
        <end position="198"/>
    </location>
</feature>
<feature type="domain" description="EF-hand 4" evidence="4">
    <location>
        <begin position="200"/>
        <end position="235"/>
    </location>
</feature>
<feature type="domain" description="EF-hand 5" evidence="4">
    <location>
        <begin position="241"/>
        <end position="276"/>
    </location>
</feature>
<feature type="domain" description="EF-hand 6" evidence="4">
    <location>
        <begin position="277"/>
        <end position="312"/>
    </location>
</feature>
<feature type="region of interest" description="Disordered" evidence="6">
    <location>
        <begin position="24"/>
        <end position="48"/>
    </location>
</feature>
<feature type="short sequence motif" description="Prevents secretion from ER" evidence="5">
    <location>
        <begin position="325"/>
        <end position="328"/>
    </location>
</feature>
<feature type="binding site" evidence="8">
    <location>
        <position position="92"/>
    </location>
    <ligand>
        <name>Ca(2+)</name>
        <dbReference type="ChEBI" id="CHEBI:29108"/>
        <label>1</label>
    </ligand>
</feature>
<feature type="binding site" evidence="8">
    <location>
        <position position="94"/>
    </location>
    <ligand>
        <name>Ca(2+)</name>
        <dbReference type="ChEBI" id="CHEBI:29108"/>
        <label>1</label>
    </ligand>
</feature>
<feature type="binding site" evidence="8">
    <location>
        <position position="96"/>
    </location>
    <ligand>
        <name>Ca(2+)</name>
        <dbReference type="ChEBI" id="CHEBI:29108"/>
        <label>1</label>
    </ligand>
</feature>
<feature type="binding site" evidence="8">
    <location>
        <position position="101"/>
    </location>
    <ligand>
        <name>Ca(2+)</name>
        <dbReference type="ChEBI" id="CHEBI:29108"/>
        <label>1</label>
    </ligand>
</feature>
<feature type="binding site" evidence="4">
    <location>
        <position position="126"/>
    </location>
    <ligand>
        <name>Ca(2+)</name>
        <dbReference type="ChEBI" id="CHEBI:29108"/>
        <label>2</label>
    </ligand>
</feature>
<feature type="binding site" evidence="4">
    <location>
        <position position="128"/>
    </location>
    <ligand>
        <name>Ca(2+)</name>
        <dbReference type="ChEBI" id="CHEBI:29108"/>
        <label>2</label>
    </ligand>
</feature>
<feature type="binding site" evidence="4">
    <location>
        <position position="130"/>
    </location>
    <ligand>
        <name>Ca(2+)</name>
        <dbReference type="ChEBI" id="CHEBI:29108"/>
        <label>2</label>
    </ligand>
</feature>
<feature type="binding site" evidence="4">
    <location>
        <position position="132"/>
    </location>
    <ligand>
        <name>Ca(2+)</name>
        <dbReference type="ChEBI" id="CHEBI:29108"/>
        <label>2</label>
    </ligand>
</feature>
<feature type="binding site" evidence="4">
    <location>
        <position position="137"/>
    </location>
    <ligand>
        <name>Ca(2+)</name>
        <dbReference type="ChEBI" id="CHEBI:29108"/>
        <label>2</label>
    </ligand>
</feature>
<feature type="binding site" evidence="8">
    <location>
        <position position="176"/>
    </location>
    <ligand>
        <name>Ca(2+)</name>
        <dbReference type="ChEBI" id="CHEBI:29108"/>
        <label>3</label>
    </ligand>
</feature>
<feature type="binding site" evidence="8">
    <location>
        <position position="178"/>
    </location>
    <ligand>
        <name>Ca(2+)</name>
        <dbReference type="ChEBI" id="CHEBI:29108"/>
        <label>3</label>
    </ligand>
</feature>
<feature type="binding site" evidence="8">
    <location>
        <position position="180"/>
    </location>
    <ligand>
        <name>Ca(2+)</name>
        <dbReference type="ChEBI" id="CHEBI:29108"/>
        <label>3</label>
    </ligand>
</feature>
<feature type="binding site" evidence="8">
    <location>
        <position position="182"/>
    </location>
    <ligand>
        <name>Ca(2+)</name>
        <dbReference type="ChEBI" id="CHEBI:29108"/>
        <label>3</label>
    </ligand>
</feature>
<feature type="binding site" evidence="8">
    <location>
        <position position="187"/>
    </location>
    <ligand>
        <name>Ca(2+)</name>
        <dbReference type="ChEBI" id="CHEBI:29108"/>
        <label>3</label>
    </ligand>
</feature>
<feature type="binding site" evidence="4">
    <location>
        <position position="213"/>
    </location>
    <ligand>
        <name>Ca(2+)</name>
        <dbReference type="ChEBI" id="CHEBI:29108"/>
        <label>4</label>
    </ligand>
</feature>
<feature type="binding site" evidence="4">
    <location>
        <position position="215"/>
    </location>
    <ligand>
        <name>Ca(2+)</name>
        <dbReference type="ChEBI" id="CHEBI:29108"/>
        <label>4</label>
    </ligand>
</feature>
<feature type="binding site" evidence="4">
    <location>
        <position position="217"/>
    </location>
    <ligand>
        <name>Ca(2+)</name>
        <dbReference type="ChEBI" id="CHEBI:29108"/>
        <label>4</label>
    </ligand>
</feature>
<feature type="binding site" evidence="4">
    <location>
        <position position="219"/>
    </location>
    <ligand>
        <name>Ca(2+)</name>
        <dbReference type="ChEBI" id="CHEBI:29108"/>
        <label>4</label>
    </ligand>
</feature>
<feature type="binding site" evidence="4">
    <location>
        <position position="224"/>
    </location>
    <ligand>
        <name>Ca(2+)</name>
        <dbReference type="ChEBI" id="CHEBI:29108"/>
        <label>4</label>
    </ligand>
</feature>
<feature type="binding site" evidence="4">
    <location>
        <position position="254"/>
    </location>
    <ligand>
        <name>Ca(2+)</name>
        <dbReference type="ChEBI" id="CHEBI:29108"/>
        <label>5</label>
    </ligand>
</feature>
<feature type="binding site" evidence="4">
    <location>
        <position position="256"/>
    </location>
    <ligand>
        <name>Ca(2+)</name>
        <dbReference type="ChEBI" id="CHEBI:29108"/>
        <label>5</label>
    </ligand>
</feature>
<feature type="binding site" evidence="4">
    <location>
        <position position="258"/>
    </location>
    <ligand>
        <name>Ca(2+)</name>
        <dbReference type="ChEBI" id="CHEBI:29108"/>
        <label>5</label>
    </ligand>
</feature>
<feature type="binding site" evidence="4">
    <location>
        <position position="260"/>
    </location>
    <ligand>
        <name>Ca(2+)</name>
        <dbReference type="ChEBI" id="CHEBI:29108"/>
        <label>5</label>
    </ligand>
</feature>
<feature type="binding site" evidence="4">
    <location>
        <position position="265"/>
    </location>
    <ligand>
        <name>Ca(2+)</name>
        <dbReference type="ChEBI" id="CHEBI:29108"/>
        <label>5</label>
    </ligand>
</feature>
<feature type="binding site" evidence="4">
    <location>
        <position position="290"/>
    </location>
    <ligand>
        <name>Ca(2+)</name>
        <dbReference type="ChEBI" id="CHEBI:29108"/>
        <label>6</label>
    </ligand>
</feature>
<feature type="binding site" evidence="4">
    <location>
        <position position="292"/>
    </location>
    <ligand>
        <name>Ca(2+)</name>
        <dbReference type="ChEBI" id="CHEBI:29108"/>
        <label>6</label>
    </ligand>
</feature>
<feature type="binding site" evidence="4">
    <location>
        <position position="294"/>
    </location>
    <ligand>
        <name>Ca(2+)</name>
        <dbReference type="ChEBI" id="CHEBI:29108"/>
        <label>6</label>
    </ligand>
</feature>
<feature type="binding site" evidence="4">
    <location>
        <position position="296"/>
    </location>
    <ligand>
        <name>Ca(2+)</name>
        <dbReference type="ChEBI" id="CHEBI:29108"/>
        <label>6</label>
    </ligand>
</feature>
<feature type="binding site" evidence="4">
    <location>
        <position position="301"/>
    </location>
    <ligand>
        <name>Ca(2+)</name>
        <dbReference type="ChEBI" id="CHEBI:29108"/>
        <label>6</label>
    </ligand>
</feature>
<feature type="glycosylation site" description="N-linked (GlcNAc...) asparagine" evidence="3">
    <location>
        <position position="140"/>
    </location>
</feature>
<feature type="sequence conflict" description="In Ref. 1; BAB23076." evidence="8" ref="1">
    <original>A</original>
    <variation>R</variation>
    <location>
        <position position="121"/>
    </location>
</feature>
<feature type="sequence conflict" description="In Ref. 2; AAH05487." evidence="8" ref="2">
    <original>R</original>
    <variation>Q</variation>
    <location>
        <position position="260"/>
    </location>
</feature>
<comment type="function">
    <text evidence="2 7">Probable molecular chaperone assisting protein biosynthesis and transport in the endoplasmic reticulum (PubMed:26252542). Required for the proper biosynthesis and transport of pulmonary surfactant-associated protein A/SP-A, pulmonary surfactant-associated protein D/SP-D and the lipid transporter ABCA3 (PubMed:26252542). By regulating both the proper expression and the degradation through the endoplasmic reticulum-associated protein degradation pathway of these proteins plays a crucial role in pulmonary surfactant homeostasis (PubMed:26252542). Has an anti-fibrotic activity by negatively regulating the secretion of type I and type III collagens (By similarity). This calcium-binding protein also transiently associates with immature PCSK6 and regulates its secretion (By similarity).</text>
</comment>
<comment type="subunit">
    <text evidence="2">Interacts with PCSK6 (immature form including the propeptide); probably involved in the maturation and the secretion of PCSK6.</text>
</comment>
<comment type="subcellular location">
    <subcellularLocation>
        <location evidence="7">Endoplasmic reticulum lumen</location>
    </subcellularLocation>
</comment>
<comment type="tissue specificity">
    <text evidence="7">Highly expressed in lung and heart. Also detected in liver, spleen, kidney, skeletal muscle, intestine, stomach, and brain.</text>
</comment>
<comment type="developmental stage">
    <text evidence="7">During lung development the expression is detected from 15.5 dpc to P1 with a maximum at 17.5 dpc which corresponds to the stage of development of alveolar saccules.</text>
</comment>
<comment type="PTM">
    <text evidence="2">Degraded by PCSK6 and other endoproteases including FURIN and PCSK5.</text>
</comment>
<comment type="PTM">
    <text evidence="1">N-glycosylated.</text>
</comment>
<comment type="disruption phenotype">
    <text evidence="7">Homozygous knockout mice show neonatal lethality (PubMed:26252542). Normally delivered newborn mice exhibit normal gross morphology, early motor activity, and response to painful stimuli (PubMed:26252542). They quickly develop severe respiratory distress with gasping and cyanosis, and die within 20 to 60 minutes after birth (PubMed:26252542). Normally developed trachea and diaphragm structure as well as no obvious gross morphological or histological abnormalities in the heart, brain, or liver suggest that abnormal lung development is the primary cause for the neonatal lethality (PubMed:26252542). Mutant mice exhibit morphological abnormalities of the lungs, including atelectasis with collapse of the alveolar space and unexpanded intra-alveolar septae (PubMed:26252542). This is associated with an impaired maturation of type 2 alveolar epithelial cells which is probably due to their failure to properly produce pulmonary surfactant (PubMed:26252542).</text>
</comment>
<comment type="similarity">
    <text evidence="8">Belongs to the CREC family.</text>
</comment>
<protein>
    <recommendedName>
        <fullName evidence="8">Reticulocalbin-3</fullName>
    </recommendedName>
</protein>
<dbReference type="EMBL" id="AK003918">
    <property type="protein sequence ID" value="BAB23076.1"/>
    <property type="molecule type" value="mRNA"/>
</dbReference>
<dbReference type="EMBL" id="AK077943">
    <property type="protein sequence ID" value="BAC37077.1"/>
    <property type="molecule type" value="mRNA"/>
</dbReference>
<dbReference type="EMBL" id="AK082762">
    <property type="protein sequence ID" value="BAC38608.1"/>
    <property type="molecule type" value="mRNA"/>
</dbReference>
<dbReference type="EMBL" id="BC005487">
    <property type="protein sequence ID" value="AAH05487.1"/>
    <property type="molecule type" value="mRNA"/>
</dbReference>
<dbReference type="EMBL" id="BC025602">
    <property type="protein sequence ID" value="AAH25602.1"/>
    <property type="molecule type" value="mRNA"/>
</dbReference>
<dbReference type="EMBL" id="BC055903">
    <property type="protein sequence ID" value="AAH55903.1"/>
    <property type="molecule type" value="mRNA"/>
</dbReference>
<dbReference type="EMBL" id="BC092069">
    <property type="protein sequence ID" value="AAH92069.1"/>
    <property type="molecule type" value="mRNA"/>
</dbReference>
<dbReference type="CCDS" id="CCDS21229.1"/>
<dbReference type="RefSeq" id="NP_001341974.1">
    <property type="nucleotide sequence ID" value="NM_001355045.1"/>
</dbReference>
<dbReference type="RefSeq" id="NP_080831.2">
    <property type="nucleotide sequence ID" value="NM_026555.2"/>
</dbReference>
<dbReference type="RefSeq" id="XP_006541049.1">
    <property type="nucleotide sequence ID" value="XM_006540986.2"/>
</dbReference>
<dbReference type="RefSeq" id="XP_006541050.1">
    <property type="nucleotide sequence ID" value="XM_006540987.4"/>
</dbReference>
<dbReference type="BioGRID" id="206549">
    <property type="interactions" value="6"/>
</dbReference>
<dbReference type="FunCoup" id="Q8BH97">
    <property type="interactions" value="465"/>
</dbReference>
<dbReference type="IntAct" id="Q8BH97">
    <property type="interactions" value="1"/>
</dbReference>
<dbReference type="STRING" id="10090.ENSMUSP00000019683"/>
<dbReference type="GlyConnect" id="2680">
    <property type="glycosylation" value="2 N-Linked glycans (1 site)"/>
</dbReference>
<dbReference type="GlyCosmos" id="Q8BH97">
    <property type="glycosylation" value="1 site, 2 glycans"/>
</dbReference>
<dbReference type="GlyGen" id="Q8BH97">
    <property type="glycosylation" value="2 sites, 2 N-linked glycans (1 site), 1 O-linked glycan (1 site)"/>
</dbReference>
<dbReference type="iPTMnet" id="Q8BH97"/>
<dbReference type="PhosphoSitePlus" id="Q8BH97"/>
<dbReference type="jPOST" id="Q8BH97"/>
<dbReference type="PaxDb" id="10090-ENSMUSP00000019683"/>
<dbReference type="PeptideAtlas" id="Q8BH97"/>
<dbReference type="ProteomicsDB" id="255172"/>
<dbReference type="Pumba" id="Q8BH97"/>
<dbReference type="Antibodypedia" id="53458">
    <property type="antibodies" value="101 antibodies from 20 providers"/>
</dbReference>
<dbReference type="DNASU" id="52377"/>
<dbReference type="Ensembl" id="ENSMUST00000019683.11">
    <property type="protein sequence ID" value="ENSMUSP00000019683.4"/>
    <property type="gene ID" value="ENSMUSG00000019539.12"/>
</dbReference>
<dbReference type="Ensembl" id="ENSMUST00000211352.2">
    <property type="protein sequence ID" value="ENSMUSP00000148227.2"/>
    <property type="gene ID" value="ENSMUSG00000019539.12"/>
</dbReference>
<dbReference type="GeneID" id="52377"/>
<dbReference type="KEGG" id="mmu:52377"/>
<dbReference type="UCSC" id="uc009gta.3">
    <property type="organism name" value="mouse"/>
</dbReference>
<dbReference type="AGR" id="MGI:1277122"/>
<dbReference type="CTD" id="57333"/>
<dbReference type="MGI" id="MGI:1277122">
    <property type="gene designation" value="Rcn3"/>
</dbReference>
<dbReference type="VEuPathDB" id="HostDB:ENSMUSG00000019539"/>
<dbReference type="eggNOG" id="KOG4223">
    <property type="taxonomic scope" value="Eukaryota"/>
</dbReference>
<dbReference type="GeneTree" id="ENSGT01010000222360"/>
<dbReference type="HOGENOM" id="CLU_044718_0_1_1"/>
<dbReference type="InParanoid" id="Q8BH97"/>
<dbReference type="OMA" id="MPMKYAD"/>
<dbReference type="OrthoDB" id="293868at2759"/>
<dbReference type="PhylomeDB" id="Q8BH97"/>
<dbReference type="TreeFam" id="TF314849"/>
<dbReference type="BioGRID-ORCS" id="52377">
    <property type="hits" value="2 hits in 79 CRISPR screens"/>
</dbReference>
<dbReference type="ChiTaRS" id="Rcn3">
    <property type="organism name" value="mouse"/>
</dbReference>
<dbReference type="PRO" id="PR:Q8BH97"/>
<dbReference type="Proteomes" id="UP000000589">
    <property type="component" value="Chromosome 7"/>
</dbReference>
<dbReference type="RNAct" id="Q8BH97">
    <property type="molecule type" value="protein"/>
</dbReference>
<dbReference type="Bgee" id="ENSMUSG00000019539">
    <property type="expression patterns" value="Expressed in vault of skull and 212 other cell types or tissues"/>
</dbReference>
<dbReference type="ExpressionAtlas" id="Q8BH97">
    <property type="expression patterns" value="baseline and differential"/>
</dbReference>
<dbReference type="GO" id="GO:0005783">
    <property type="term" value="C:endoplasmic reticulum"/>
    <property type="evidence" value="ECO:0000314"/>
    <property type="project" value="UniProtKB"/>
</dbReference>
<dbReference type="GO" id="GO:0005788">
    <property type="term" value="C:endoplasmic reticulum lumen"/>
    <property type="evidence" value="ECO:0007669"/>
    <property type="project" value="UniProtKB-SubCell"/>
</dbReference>
<dbReference type="GO" id="GO:0005509">
    <property type="term" value="F:calcium ion binding"/>
    <property type="evidence" value="ECO:0000250"/>
    <property type="project" value="UniProtKB"/>
</dbReference>
<dbReference type="GO" id="GO:0032964">
    <property type="term" value="P:collagen biosynthetic process"/>
    <property type="evidence" value="ECO:0000250"/>
    <property type="project" value="UniProtKB"/>
</dbReference>
<dbReference type="GO" id="GO:0036503">
    <property type="term" value="P:ERAD pathway"/>
    <property type="evidence" value="ECO:0000315"/>
    <property type="project" value="UniProtKB"/>
</dbReference>
<dbReference type="GO" id="GO:0060428">
    <property type="term" value="P:lung epithelium development"/>
    <property type="evidence" value="ECO:0000315"/>
    <property type="project" value="UniProtKB"/>
</dbReference>
<dbReference type="GO" id="GO:0055091">
    <property type="term" value="P:phospholipid homeostasis"/>
    <property type="evidence" value="ECO:0000315"/>
    <property type="project" value="UniProtKB"/>
</dbReference>
<dbReference type="GO" id="GO:0010952">
    <property type="term" value="P:positive regulation of peptidase activity"/>
    <property type="evidence" value="ECO:0000250"/>
    <property type="project" value="UniProtKB"/>
</dbReference>
<dbReference type="GO" id="GO:0009306">
    <property type="term" value="P:protein secretion"/>
    <property type="evidence" value="ECO:0000250"/>
    <property type="project" value="UniProtKB"/>
</dbReference>
<dbReference type="GO" id="GO:0015031">
    <property type="term" value="P:protein transport"/>
    <property type="evidence" value="ECO:0000315"/>
    <property type="project" value="UniProtKB"/>
</dbReference>
<dbReference type="GO" id="GO:0051896">
    <property type="term" value="P:regulation of phosphatidylinositol 3-kinase/protein kinase B signal transduction"/>
    <property type="evidence" value="ECO:0007669"/>
    <property type="project" value="Ensembl"/>
</dbReference>
<dbReference type="GO" id="GO:0043129">
    <property type="term" value="P:surfactant homeostasis"/>
    <property type="evidence" value="ECO:0000315"/>
    <property type="project" value="UniProtKB"/>
</dbReference>
<dbReference type="CDD" id="cd16230">
    <property type="entry name" value="EFh_CREC_RCN3"/>
    <property type="match status" value="1"/>
</dbReference>
<dbReference type="FunFam" id="1.10.238.10:FF:000104">
    <property type="entry name" value="calumenin isoform X1"/>
    <property type="match status" value="1"/>
</dbReference>
<dbReference type="Gene3D" id="1.10.238.10">
    <property type="entry name" value="EF-hand"/>
    <property type="match status" value="2"/>
</dbReference>
<dbReference type="InterPro" id="IPR011992">
    <property type="entry name" value="EF-hand-dom_pair"/>
</dbReference>
<dbReference type="InterPro" id="IPR018247">
    <property type="entry name" value="EF_Hand_1_Ca_BS"/>
</dbReference>
<dbReference type="InterPro" id="IPR002048">
    <property type="entry name" value="EF_hand_dom"/>
</dbReference>
<dbReference type="PANTHER" id="PTHR10827">
    <property type="entry name" value="RETICULOCALBIN"/>
    <property type="match status" value="1"/>
</dbReference>
<dbReference type="PANTHER" id="PTHR10827:SF47">
    <property type="entry name" value="RETICULOCALBIN-3"/>
    <property type="match status" value="1"/>
</dbReference>
<dbReference type="Pfam" id="PF13202">
    <property type="entry name" value="EF-hand_5"/>
    <property type="match status" value="1"/>
</dbReference>
<dbReference type="Pfam" id="PF13499">
    <property type="entry name" value="EF-hand_7"/>
    <property type="match status" value="1"/>
</dbReference>
<dbReference type="SMART" id="SM00054">
    <property type="entry name" value="EFh"/>
    <property type="match status" value="3"/>
</dbReference>
<dbReference type="SUPFAM" id="SSF47473">
    <property type="entry name" value="EF-hand"/>
    <property type="match status" value="2"/>
</dbReference>
<dbReference type="PROSITE" id="PS00018">
    <property type="entry name" value="EF_HAND_1"/>
    <property type="match status" value="4"/>
</dbReference>
<dbReference type="PROSITE" id="PS50222">
    <property type="entry name" value="EF_HAND_2"/>
    <property type="match status" value="6"/>
</dbReference>
<dbReference type="PROSITE" id="PS00014">
    <property type="entry name" value="ER_TARGET"/>
    <property type="match status" value="1"/>
</dbReference>